<sequence length="430" mass="47411">MALLHSSRILSGMAAAFHPGLAAAASARASSWWTHVEMGPPDPILGVTEAFKRDTNSKKMNLGVGAYRDDNGKPYVLPSVRKAEAQIAAKNLDKEYLPIGGLAEFCKASAELALGENNEVLKSGRFVTVQTISGTGALRVGASFLQRFFKFSRDVFLPKPSWGNHTPIFRDAGMQLQGYRYYDPKTCGFDFSGALEDISKIPEQSVLLLHACAHNPTGVDPRPEQWKEIASVVKKKNLFAFFDMAYQGFASGDGDKDAWAVRHFIEQGINVCLCQSYAKNMGLYGERVGAFTVVCKDAEEAKRVESQLKILIRPLYSNPPLNGARIAATILTSPDLRKQWLQEVKGMADRIISMRTQLVSNLKKEGSSHNWQHITDQIGMFCFTGLKPEQVERLTKEFSVYMTKDGRISVAGVTSGNVGYLAHAIHQVTK</sequence>
<comment type="function">
    <text evidence="6 8">Catalyzes the irreversible transamination of the L-tryptophan metabolite L-kynurenine to form kynurenic acid (KA). As a member of the malate-aspartate shuttle, it has a key role in the intracellular NAD(H) redox balance. Is important for metabolite exchange between mitochondria and cytosol, and for amino acid metabolism. Facilitates cellular uptake of long-chain free fatty acids.</text>
</comment>
<comment type="catalytic activity">
    <reaction evidence="3">
        <text>L-aspartate + 2-oxoglutarate = oxaloacetate + L-glutamate</text>
        <dbReference type="Rhea" id="RHEA:21824"/>
        <dbReference type="ChEBI" id="CHEBI:16452"/>
        <dbReference type="ChEBI" id="CHEBI:16810"/>
        <dbReference type="ChEBI" id="CHEBI:29985"/>
        <dbReference type="ChEBI" id="CHEBI:29991"/>
        <dbReference type="EC" id="2.6.1.1"/>
    </reaction>
</comment>
<comment type="catalytic activity">
    <reaction evidence="3">
        <text>L-kynurenine + 2-oxoglutarate = kynurenate + L-glutamate + H2O</text>
        <dbReference type="Rhea" id="RHEA:65560"/>
        <dbReference type="ChEBI" id="CHEBI:15377"/>
        <dbReference type="ChEBI" id="CHEBI:16810"/>
        <dbReference type="ChEBI" id="CHEBI:29985"/>
        <dbReference type="ChEBI" id="CHEBI:57959"/>
        <dbReference type="ChEBI" id="CHEBI:58454"/>
        <dbReference type="EC" id="2.6.1.7"/>
    </reaction>
</comment>
<comment type="cofactor">
    <cofactor evidence="6">
        <name>pyridoxal 5'-phosphate</name>
        <dbReference type="ChEBI" id="CHEBI:597326"/>
    </cofactor>
</comment>
<comment type="subunit">
    <text evidence="5 6">Homodimer.</text>
</comment>
<comment type="subcellular location">
    <subcellularLocation>
        <location>Mitochondrion matrix</location>
    </subcellularLocation>
    <subcellularLocation>
        <location evidence="8">Cell membrane</location>
    </subcellularLocation>
</comment>
<comment type="tissue specificity">
    <text evidence="4">Detected in brain (at protein level).</text>
</comment>
<comment type="PTM">
    <text>Acetylation of Lys-296, Lys-345 and Lys-363 is observed in liver mitochondria from fasted mice but not from fed mice.</text>
</comment>
<comment type="miscellaneous">
    <text>In eukaryotes there are cytoplasmic, mitochondrial and chloroplastic isozymes.</text>
</comment>
<comment type="similarity">
    <text evidence="9">Belongs to the class-I pyridoxal-phosphate-dependent aminotransferase family.</text>
</comment>
<feature type="transit peptide" description="Mitochondrion">
    <location>
        <begin position="1"/>
        <end position="29"/>
    </location>
</feature>
<feature type="chain" id="PRO_0000001216" description="Aspartate aminotransferase, mitochondrial">
    <location>
        <begin position="30"/>
        <end position="430"/>
    </location>
</feature>
<feature type="binding site" evidence="1">
    <location>
        <position position="65"/>
    </location>
    <ligand>
        <name>substrate</name>
    </ligand>
</feature>
<feature type="binding site" evidence="1">
    <location>
        <position position="162"/>
    </location>
    <ligand>
        <name>substrate</name>
    </ligand>
</feature>
<feature type="binding site">
    <location>
        <position position="215"/>
    </location>
    <ligand>
        <name>substrate</name>
    </ligand>
</feature>
<feature type="binding site">
    <location>
        <position position="407"/>
    </location>
    <ligand>
        <name>substrate</name>
    </ligand>
</feature>
<feature type="modified residue" description="Phosphothreonine" evidence="2">
    <location>
        <position position="48"/>
    </location>
</feature>
<feature type="modified residue" description="N6-acetyllysine" evidence="11">
    <location>
        <position position="59"/>
    </location>
</feature>
<feature type="modified residue" description="N6-acetyllysine; alternate" evidence="11 12">
    <location>
        <position position="73"/>
    </location>
</feature>
<feature type="modified residue" description="N6-succinyllysine; alternate" evidence="12">
    <location>
        <position position="73"/>
    </location>
</feature>
<feature type="modified residue" description="N6-acetyllysine" evidence="11">
    <location>
        <position position="82"/>
    </location>
</feature>
<feature type="modified residue" description="N6-acetyllysine; alternate" evidence="11">
    <location>
        <position position="90"/>
    </location>
</feature>
<feature type="modified residue" description="N6-succinyllysine; alternate" evidence="12">
    <location>
        <position position="90"/>
    </location>
</feature>
<feature type="modified residue" description="3'-nitrotyrosine; alternate" evidence="10">
    <location>
        <position position="96"/>
    </location>
</feature>
<feature type="modified residue" description="Phosphotyrosine; alternate" evidence="2">
    <location>
        <position position="96"/>
    </location>
</feature>
<feature type="modified residue" description="N6-acetyllysine; alternate" evidence="11">
    <location>
        <position position="107"/>
    </location>
</feature>
<feature type="modified residue" description="N6-succinyllysine; alternate" evidence="12">
    <location>
        <position position="107"/>
    </location>
</feature>
<feature type="modified residue" description="N6-acetyllysine; alternate" evidence="11">
    <location>
        <position position="122"/>
    </location>
</feature>
<feature type="modified residue" description="N6-succinyllysine; alternate" evidence="12">
    <location>
        <position position="122"/>
    </location>
</feature>
<feature type="modified residue" description="Phosphoserine" evidence="2">
    <location>
        <position position="143"/>
    </location>
</feature>
<feature type="modified residue" description="N6-acetyllysine; alternate" evidence="11 12">
    <location>
        <position position="159"/>
    </location>
</feature>
<feature type="modified residue" description="N6-succinyllysine; alternate" evidence="12">
    <location>
        <position position="159"/>
    </location>
</feature>
<feature type="modified residue" description="N6-acetyllysine; alternate" evidence="11">
    <location>
        <position position="185"/>
    </location>
</feature>
<feature type="modified residue" description="N6-succinyllysine; alternate" evidence="12">
    <location>
        <position position="185"/>
    </location>
</feature>
<feature type="modified residue" description="N6-succinyllysine" evidence="12">
    <location>
        <position position="227"/>
    </location>
</feature>
<feature type="modified residue" description="N6-acetyllysine" evidence="11">
    <location>
        <position position="234"/>
    </location>
</feature>
<feature type="modified residue" description="N6-(pyridoxal phosphate)lysine; alternate" evidence="1">
    <location>
        <position position="279"/>
    </location>
</feature>
<feature type="modified residue" description="N6-acetyllysine; alternate" evidence="11">
    <location>
        <position position="279"/>
    </location>
</feature>
<feature type="modified residue" description="N6-acetyllysine; alternate" evidence="11">
    <location>
        <position position="296"/>
    </location>
</feature>
<feature type="modified residue" description="N6-succinyllysine; alternate" evidence="12">
    <location>
        <position position="296"/>
    </location>
</feature>
<feature type="modified residue" description="N6-acetyllysine" evidence="11">
    <location>
        <position position="302"/>
    </location>
</feature>
<feature type="modified residue" description="N6-acetyllysine; alternate" evidence="11">
    <location>
        <position position="309"/>
    </location>
</feature>
<feature type="modified residue" description="N6-succinyllysine; alternate" evidence="12">
    <location>
        <position position="309"/>
    </location>
</feature>
<feature type="modified residue" description="Asymmetric dimethylarginine" evidence="13">
    <location>
        <position position="313"/>
    </location>
</feature>
<feature type="modified residue" description="N6-acetyllysine; alternate" evidence="11">
    <location>
        <position position="338"/>
    </location>
</feature>
<feature type="modified residue" description="N6-succinyllysine; alternate" evidence="12">
    <location>
        <position position="338"/>
    </location>
</feature>
<feature type="modified residue" description="N6-acetyllysine" evidence="11">
    <location>
        <position position="345"/>
    </location>
</feature>
<feature type="modified residue" description="N6-acetyllysine; alternate" evidence="11">
    <location>
        <position position="363"/>
    </location>
</feature>
<feature type="modified residue" description="N6-succinyllysine; alternate" evidence="12">
    <location>
        <position position="363"/>
    </location>
</feature>
<feature type="modified residue" description="N6-acetyllysine" evidence="11">
    <location>
        <position position="364"/>
    </location>
</feature>
<feature type="modified residue" description="N6-acetyllysine" evidence="11">
    <location>
        <position position="387"/>
    </location>
</feature>
<feature type="modified residue" description="N6-acetyllysine; alternate" evidence="11">
    <location>
        <position position="396"/>
    </location>
</feature>
<feature type="modified residue" description="N6-succinyllysine; alternate" evidence="12">
    <location>
        <position position="396"/>
    </location>
</feature>
<feature type="modified residue" description="N6-acetyllysine; alternate" evidence="11 12">
    <location>
        <position position="404"/>
    </location>
</feature>
<feature type="modified residue" description="N6-succinyllysine; alternate" evidence="12">
    <location>
        <position position="404"/>
    </location>
</feature>
<feature type="mutagenesis site" description="Heterozygous mice are viable and healthy. Results in early lethality at homozygosity." evidence="7">
    <location>
        <position position="209"/>
    </location>
</feature>
<feature type="mutagenesis site" description="Heterozygous mice are viable and healthy. Results in early lethality at homozygosity." evidence="7">
    <original>R</original>
    <variation>G</variation>
    <location>
        <position position="337"/>
    </location>
</feature>
<feature type="sequence conflict" description="In Ref. 4; BAE39800." evidence="9" ref="4">
    <original>R</original>
    <variation>G</variation>
    <location>
        <position position="68"/>
    </location>
</feature>
<feature type="sequence conflict" description="In Ref. 3; AAB91426." evidence="9" ref="3">
    <original>Q</original>
    <variation>E</variation>
    <location>
        <position position="146"/>
    </location>
</feature>
<feature type="sequence conflict" description="In Ref. 4; BAE39800." evidence="9" ref="4">
    <original>R</original>
    <variation>G</variation>
    <location>
        <position position="153"/>
    </location>
</feature>
<feature type="sequence conflict" description="In Ref. 4; BAE39800." evidence="9" ref="4">
    <original>Q</original>
    <variation>K</variation>
    <location>
        <position position="377"/>
    </location>
</feature>
<feature type="sequence conflict" description="In Ref. 4; BAE39800." evidence="9" ref="4">
    <original>L</original>
    <variation>I</variation>
    <location>
        <position position="421"/>
    </location>
</feature>
<feature type="turn" evidence="14">
    <location>
        <begin position="32"/>
        <end position="35"/>
    </location>
</feature>
<feature type="helix" evidence="14">
    <location>
        <begin position="43"/>
        <end position="53"/>
    </location>
</feature>
<feature type="helix" evidence="14">
    <location>
        <begin position="78"/>
        <end position="89"/>
    </location>
</feature>
<feature type="helix" evidence="14">
    <location>
        <begin position="103"/>
        <end position="114"/>
    </location>
</feature>
<feature type="helix" evidence="14">
    <location>
        <begin position="119"/>
        <end position="123"/>
    </location>
</feature>
<feature type="strand" evidence="14">
    <location>
        <begin position="126"/>
        <end position="132"/>
    </location>
</feature>
<feature type="helix" evidence="14">
    <location>
        <begin position="133"/>
        <end position="148"/>
    </location>
</feature>
<feature type="strand" evidence="14">
    <location>
        <begin position="153"/>
        <end position="160"/>
    </location>
</feature>
<feature type="helix" evidence="14">
    <location>
        <begin position="165"/>
        <end position="172"/>
    </location>
</feature>
<feature type="strand" evidence="14">
    <location>
        <begin position="175"/>
        <end position="180"/>
    </location>
</feature>
<feature type="turn" evidence="14">
    <location>
        <begin position="184"/>
        <end position="186"/>
    </location>
</feature>
<feature type="strand" evidence="14">
    <location>
        <begin position="187"/>
        <end position="189"/>
    </location>
</feature>
<feature type="helix" evidence="14">
    <location>
        <begin position="191"/>
        <end position="199"/>
    </location>
</feature>
<feature type="strand" evidence="14">
    <location>
        <begin position="206"/>
        <end position="210"/>
    </location>
</feature>
<feature type="turn" evidence="14">
    <location>
        <begin position="215"/>
        <end position="217"/>
    </location>
</feature>
<feature type="helix" evidence="14">
    <location>
        <begin position="223"/>
        <end position="235"/>
    </location>
</feature>
<feature type="strand" evidence="14">
    <location>
        <begin position="239"/>
        <end position="245"/>
    </location>
</feature>
<feature type="turn" evidence="14">
    <location>
        <begin position="247"/>
        <end position="251"/>
    </location>
</feature>
<feature type="helix" evidence="14">
    <location>
        <begin position="254"/>
        <end position="257"/>
    </location>
</feature>
<feature type="helix" evidence="14">
    <location>
        <begin position="259"/>
        <end position="266"/>
    </location>
</feature>
<feature type="strand" evidence="14">
    <location>
        <begin position="272"/>
        <end position="276"/>
    </location>
</feature>
<feature type="turn" evidence="14">
    <location>
        <begin position="278"/>
        <end position="280"/>
    </location>
</feature>
<feature type="helix" evidence="14">
    <location>
        <begin position="284"/>
        <end position="286"/>
    </location>
</feature>
<feature type="strand" evidence="14">
    <location>
        <begin position="288"/>
        <end position="294"/>
    </location>
</feature>
<feature type="helix" evidence="14">
    <location>
        <begin position="298"/>
        <end position="316"/>
    </location>
</feature>
<feature type="helix" evidence="14">
    <location>
        <begin position="322"/>
        <end position="332"/>
    </location>
</feature>
<feature type="helix" evidence="14">
    <location>
        <begin position="334"/>
        <end position="364"/>
    </location>
</feature>
<feature type="helix" evidence="14">
    <location>
        <begin position="373"/>
        <end position="376"/>
    </location>
</feature>
<feature type="strand" evidence="14">
    <location>
        <begin position="379"/>
        <end position="383"/>
    </location>
</feature>
<feature type="helix" evidence="14">
    <location>
        <begin position="388"/>
        <end position="398"/>
    </location>
</feature>
<feature type="strand" evidence="14">
    <location>
        <begin position="406"/>
        <end position="409"/>
    </location>
</feature>
<feature type="helix" evidence="14">
    <location>
        <begin position="410"/>
        <end position="412"/>
    </location>
</feature>
<feature type="turn" evidence="14">
    <location>
        <begin position="415"/>
        <end position="417"/>
    </location>
</feature>
<feature type="helix" evidence="14">
    <location>
        <begin position="418"/>
        <end position="429"/>
    </location>
</feature>
<accession>P05202</accession>
<accession>O09188</accession>
<accession>Q3TIP6</accession>
<accession>Q3UD91</accession>
<accession>Q5HZH5</accession>
<keyword id="KW-0002">3D-structure</keyword>
<keyword id="KW-0007">Acetylation</keyword>
<keyword id="KW-0032">Aminotransferase</keyword>
<keyword id="KW-1003">Cell membrane</keyword>
<keyword id="KW-0903">Direct protein sequencing</keyword>
<keyword id="KW-0445">Lipid transport</keyword>
<keyword id="KW-0472">Membrane</keyword>
<keyword id="KW-0488">Methylation</keyword>
<keyword id="KW-0496">Mitochondrion</keyword>
<keyword id="KW-0944">Nitration</keyword>
<keyword id="KW-0597">Phosphoprotein</keyword>
<keyword id="KW-0663">Pyridoxal phosphate</keyword>
<keyword id="KW-1185">Reference proteome</keyword>
<keyword id="KW-0808">Transferase</keyword>
<keyword id="KW-0809">Transit peptide</keyword>
<keyword id="KW-0813">Transport</keyword>
<protein>
    <recommendedName>
        <fullName>Aspartate aminotransferase, mitochondrial</fullName>
        <shortName>mAspAT</shortName>
        <ecNumber evidence="3">2.6.1.1</ecNumber>
        <ecNumber evidence="3">2.6.1.7</ecNumber>
    </recommendedName>
    <alternativeName>
        <fullName>Fatty acid-binding protein</fullName>
        <shortName>FABP-1</shortName>
    </alternativeName>
    <alternativeName>
        <fullName>Glutamate oxaloacetate transaminase 2</fullName>
    </alternativeName>
    <alternativeName>
        <fullName>Kynurenine aminotransferase 4</fullName>
    </alternativeName>
    <alternativeName>
        <fullName>Kynurenine aminotransferase IV</fullName>
    </alternativeName>
    <alternativeName>
        <fullName>Kynurenine--oxoglutarate transaminase 4</fullName>
    </alternativeName>
    <alternativeName>
        <fullName>Kynurenine--oxoglutarate transaminase IV</fullName>
    </alternativeName>
    <alternativeName>
        <fullName>Plasma membrane-associated fatty acid-binding protein</fullName>
        <shortName>FABPpm</shortName>
    </alternativeName>
    <alternativeName>
        <fullName>Transaminase A</fullName>
    </alternativeName>
</protein>
<organism>
    <name type="scientific">Mus musculus</name>
    <name type="common">Mouse</name>
    <dbReference type="NCBI Taxonomy" id="10090"/>
    <lineage>
        <taxon>Eukaryota</taxon>
        <taxon>Metazoa</taxon>
        <taxon>Chordata</taxon>
        <taxon>Craniata</taxon>
        <taxon>Vertebrata</taxon>
        <taxon>Euteleostomi</taxon>
        <taxon>Mammalia</taxon>
        <taxon>Eutheria</taxon>
        <taxon>Euarchontoglires</taxon>
        <taxon>Glires</taxon>
        <taxon>Rodentia</taxon>
        <taxon>Myomorpha</taxon>
        <taxon>Muroidea</taxon>
        <taxon>Muridae</taxon>
        <taxon>Murinae</taxon>
        <taxon>Mus</taxon>
        <taxon>Mus</taxon>
    </lineage>
</organism>
<evidence type="ECO:0000250" key="1"/>
<evidence type="ECO:0000250" key="2">
    <source>
        <dbReference type="UniProtKB" id="P00505"/>
    </source>
</evidence>
<evidence type="ECO:0000250" key="3">
    <source>
        <dbReference type="UniProtKB" id="P00507"/>
    </source>
</evidence>
<evidence type="ECO:0000269" key="4">
    <source>
    </source>
</evidence>
<evidence type="ECO:0000269" key="5">
    <source>
    </source>
</evidence>
<evidence type="ECO:0000269" key="6">
    <source>
    </source>
</evidence>
<evidence type="ECO:0000269" key="7">
    <source>
    </source>
</evidence>
<evidence type="ECO:0000269" key="8">
    <source>
    </source>
</evidence>
<evidence type="ECO:0000305" key="9"/>
<evidence type="ECO:0007744" key="10">
    <source>
    </source>
</evidence>
<evidence type="ECO:0007744" key="11">
    <source>
    </source>
</evidence>
<evidence type="ECO:0007744" key="12">
    <source>
    </source>
</evidence>
<evidence type="ECO:0007744" key="13">
    <source>
    </source>
</evidence>
<evidence type="ECO:0007829" key="14">
    <source>
        <dbReference type="PDB" id="3PD6"/>
    </source>
</evidence>
<reference key="1">
    <citation type="journal article" date="1986" name="J. Biol. Chem.">
        <title>Cloning and sequence analysis of mRNA for mouse aspartate aminotransferase isoenzymes.</title>
        <authorList>
            <person name="Obaru K."/>
            <person name="Nomiyama H."/>
            <person name="Shimada K."/>
            <person name="Nagashima F."/>
            <person name="Morino Y."/>
        </authorList>
    </citation>
    <scope>NUCLEOTIDE SEQUENCE [MRNA]</scope>
</reference>
<reference key="2">
    <citation type="journal article" date="1987" name="J. Mol. Biol.">
        <title>Structural organization of the mouse mitochondrial aspartate aminotransferase gene.</title>
        <authorList>
            <person name="Tsuzuki T."/>
            <person name="Obaru K."/>
            <person name="Setoyama C."/>
            <person name="Shimada K."/>
        </authorList>
    </citation>
    <scope>NUCLEOTIDE SEQUENCE [MRNA]</scope>
    <source>
        <strain>C3H/He</strain>
        <tissue>Liver</tissue>
    </source>
</reference>
<reference key="3">
    <citation type="journal article" date="2000" name="Biochem. J.">
        <title>Mitochondrial aspartate aminotransferase: direction of a single protein with two distinct functions to two subcellular sites does not require alternative splicing of the mRNA.</title>
        <authorList>
            <person name="Bradbury M.W."/>
            <person name="Berk P.D."/>
        </authorList>
    </citation>
    <scope>NUCLEOTIDE SEQUENCE [MRNA]</scope>
    <scope>SUBCELLULAR LOCATION</scope>
    <source>
        <strain>FVB/NJ</strain>
        <tissue>Liver</tissue>
    </source>
</reference>
<reference key="4">
    <citation type="journal article" date="2005" name="Science">
        <title>The transcriptional landscape of the mammalian genome.</title>
        <authorList>
            <person name="Carninci P."/>
            <person name="Kasukawa T."/>
            <person name="Katayama S."/>
            <person name="Gough J."/>
            <person name="Frith M.C."/>
            <person name="Maeda N."/>
            <person name="Oyama R."/>
            <person name="Ravasi T."/>
            <person name="Lenhard B."/>
            <person name="Wells C."/>
            <person name="Kodzius R."/>
            <person name="Shimokawa K."/>
            <person name="Bajic V.B."/>
            <person name="Brenner S.E."/>
            <person name="Batalov S."/>
            <person name="Forrest A.R."/>
            <person name="Zavolan M."/>
            <person name="Davis M.J."/>
            <person name="Wilming L.G."/>
            <person name="Aidinis V."/>
            <person name="Allen J.E."/>
            <person name="Ambesi-Impiombato A."/>
            <person name="Apweiler R."/>
            <person name="Aturaliya R.N."/>
            <person name="Bailey T.L."/>
            <person name="Bansal M."/>
            <person name="Baxter L."/>
            <person name="Beisel K.W."/>
            <person name="Bersano T."/>
            <person name="Bono H."/>
            <person name="Chalk A.M."/>
            <person name="Chiu K.P."/>
            <person name="Choudhary V."/>
            <person name="Christoffels A."/>
            <person name="Clutterbuck D.R."/>
            <person name="Crowe M.L."/>
            <person name="Dalla E."/>
            <person name="Dalrymple B.P."/>
            <person name="de Bono B."/>
            <person name="Della Gatta G."/>
            <person name="di Bernardo D."/>
            <person name="Down T."/>
            <person name="Engstrom P."/>
            <person name="Fagiolini M."/>
            <person name="Faulkner G."/>
            <person name="Fletcher C.F."/>
            <person name="Fukushima T."/>
            <person name="Furuno M."/>
            <person name="Futaki S."/>
            <person name="Gariboldi M."/>
            <person name="Georgii-Hemming P."/>
            <person name="Gingeras T.R."/>
            <person name="Gojobori T."/>
            <person name="Green R.E."/>
            <person name="Gustincich S."/>
            <person name="Harbers M."/>
            <person name="Hayashi Y."/>
            <person name="Hensch T.K."/>
            <person name="Hirokawa N."/>
            <person name="Hill D."/>
            <person name="Huminiecki L."/>
            <person name="Iacono M."/>
            <person name="Ikeo K."/>
            <person name="Iwama A."/>
            <person name="Ishikawa T."/>
            <person name="Jakt M."/>
            <person name="Kanapin A."/>
            <person name="Katoh M."/>
            <person name="Kawasawa Y."/>
            <person name="Kelso J."/>
            <person name="Kitamura H."/>
            <person name="Kitano H."/>
            <person name="Kollias G."/>
            <person name="Krishnan S.P."/>
            <person name="Kruger A."/>
            <person name="Kummerfeld S.K."/>
            <person name="Kurochkin I.V."/>
            <person name="Lareau L.F."/>
            <person name="Lazarevic D."/>
            <person name="Lipovich L."/>
            <person name="Liu J."/>
            <person name="Liuni S."/>
            <person name="McWilliam S."/>
            <person name="Madan Babu M."/>
            <person name="Madera M."/>
            <person name="Marchionni L."/>
            <person name="Matsuda H."/>
            <person name="Matsuzawa S."/>
            <person name="Miki H."/>
            <person name="Mignone F."/>
            <person name="Miyake S."/>
            <person name="Morris K."/>
            <person name="Mottagui-Tabar S."/>
            <person name="Mulder N."/>
            <person name="Nakano N."/>
            <person name="Nakauchi H."/>
            <person name="Ng P."/>
            <person name="Nilsson R."/>
            <person name="Nishiguchi S."/>
            <person name="Nishikawa S."/>
            <person name="Nori F."/>
            <person name="Ohara O."/>
            <person name="Okazaki Y."/>
            <person name="Orlando V."/>
            <person name="Pang K.C."/>
            <person name="Pavan W.J."/>
            <person name="Pavesi G."/>
            <person name="Pesole G."/>
            <person name="Petrovsky N."/>
            <person name="Piazza S."/>
            <person name="Reed J."/>
            <person name="Reid J.F."/>
            <person name="Ring B.Z."/>
            <person name="Ringwald M."/>
            <person name="Rost B."/>
            <person name="Ruan Y."/>
            <person name="Salzberg S.L."/>
            <person name="Sandelin A."/>
            <person name="Schneider C."/>
            <person name="Schoenbach C."/>
            <person name="Sekiguchi K."/>
            <person name="Semple C.A."/>
            <person name="Seno S."/>
            <person name="Sessa L."/>
            <person name="Sheng Y."/>
            <person name="Shibata Y."/>
            <person name="Shimada H."/>
            <person name="Shimada K."/>
            <person name="Silva D."/>
            <person name="Sinclair B."/>
            <person name="Sperling S."/>
            <person name="Stupka E."/>
            <person name="Sugiura K."/>
            <person name="Sultana R."/>
            <person name="Takenaka Y."/>
            <person name="Taki K."/>
            <person name="Tammoja K."/>
            <person name="Tan S.L."/>
            <person name="Tang S."/>
            <person name="Taylor M.S."/>
            <person name="Tegner J."/>
            <person name="Teichmann S.A."/>
            <person name="Ueda H.R."/>
            <person name="van Nimwegen E."/>
            <person name="Verardo R."/>
            <person name="Wei C.L."/>
            <person name="Yagi K."/>
            <person name="Yamanishi H."/>
            <person name="Zabarovsky E."/>
            <person name="Zhu S."/>
            <person name="Zimmer A."/>
            <person name="Hide W."/>
            <person name="Bult C."/>
            <person name="Grimmond S.M."/>
            <person name="Teasdale R.D."/>
            <person name="Liu E.T."/>
            <person name="Brusic V."/>
            <person name="Quackenbush J."/>
            <person name="Wahlestedt C."/>
            <person name="Mattick J.S."/>
            <person name="Hume D.A."/>
            <person name="Kai C."/>
            <person name="Sasaki D."/>
            <person name="Tomaru Y."/>
            <person name="Fukuda S."/>
            <person name="Kanamori-Katayama M."/>
            <person name="Suzuki M."/>
            <person name="Aoki J."/>
            <person name="Arakawa T."/>
            <person name="Iida J."/>
            <person name="Imamura K."/>
            <person name="Itoh M."/>
            <person name="Kato T."/>
            <person name="Kawaji H."/>
            <person name="Kawagashira N."/>
            <person name="Kawashima T."/>
            <person name="Kojima M."/>
            <person name="Kondo S."/>
            <person name="Konno H."/>
            <person name="Nakano K."/>
            <person name="Ninomiya N."/>
            <person name="Nishio T."/>
            <person name="Okada M."/>
            <person name="Plessy C."/>
            <person name="Shibata K."/>
            <person name="Shiraki T."/>
            <person name="Suzuki S."/>
            <person name="Tagami M."/>
            <person name="Waki K."/>
            <person name="Watahiki A."/>
            <person name="Okamura-Oho Y."/>
            <person name="Suzuki H."/>
            <person name="Kawai J."/>
            <person name="Hayashizaki Y."/>
        </authorList>
    </citation>
    <scope>NUCLEOTIDE SEQUENCE [LARGE SCALE MRNA]</scope>
    <source>
        <strain>BALB/cJ</strain>
        <strain>C57BL/6J</strain>
        <strain>NOD</strain>
        <tissue>Bone marrow macrophage</tissue>
        <tissue>Cecum</tissue>
        <tissue>Dendritic cell</tissue>
        <tissue>Melanocyte</tissue>
    </source>
</reference>
<reference key="5">
    <citation type="journal article" date="2004" name="Genome Res.">
        <title>The status, quality, and expansion of the NIH full-length cDNA project: the Mammalian Gene Collection (MGC).</title>
        <authorList>
            <consortium name="The MGC Project Team"/>
        </authorList>
    </citation>
    <scope>NUCLEOTIDE SEQUENCE [LARGE SCALE MRNA]</scope>
    <source>
        <strain>C57BL/6J</strain>
        <tissue>Brain</tissue>
        <tissue>Eye</tissue>
    </source>
</reference>
<reference key="6">
    <citation type="submission" date="2009-01" db="UniProtKB">
        <authorList>
            <person name="Lubec G."/>
            <person name="Kang S.U."/>
            <person name="Sunyer B."/>
            <person name="Chen W.-Q."/>
        </authorList>
    </citation>
    <scope>PROTEIN SEQUENCE OF 60-81; 91-122; 126-139; 171-180; 186-200; 280-296; 310-345; 356-363 AND 397-404</scope>
    <scope>IDENTIFICATION BY MASS SPECTROMETRY</scope>
    <source>
        <strain>C57BL/6J</strain>
        <strain>OF1</strain>
        <tissue>Brain</tissue>
        <tissue>Hippocampus</tissue>
    </source>
</reference>
<reference key="7">
    <citation type="journal article" date="1995" name="Proc. Soc. Exp. Biol. Med.">
        <title>Mitochondrial aspartate aminotransferase expressed on the surface of 3T3-L1 adipocytes mediates saturable fatty acid uptake.</title>
        <authorList>
            <person name="Zhou S.-L."/>
            <person name="Stump D."/>
            <person name="Kiang C.L."/>
            <person name="Isola L.M."/>
            <person name="Berk P.D."/>
        </authorList>
    </citation>
    <scope>FUNCTION</scope>
    <scope>SUBCELLULAR LOCATION</scope>
</reference>
<reference key="8">
    <citation type="journal article" date="2006" name="Biochemistry">
        <title>Endogenously nitrated proteins in mouse brain: links to neurodegenerative disease.</title>
        <authorList>
            <person name="Sacksteder C.A."/>
            <person name="Qian W.-J."/>
            <person name="Knyushko T.V."/>
            <person name="Wang H."/>
            <person name="Chin M.H."/>
            <person name="Lacan G."/>
            <person name="Melega W.P."/>
            <person name="Camp D.G. II"/>
            <person name="Smith R.D."/>
            <person name="Smith D.J."/>
            <person name="Squier T.C."/>
            <person name="Bigelow D.J."/>
        </authorList>
    </citation>
    <scope>NITRATION [LARGE SCALE ANALYSIS] AT TYR-96</scope>
    <scope>IDENTIFICATION BY MASS SPECTROMETRY [LARGE SCALE ANALYSIS]</scope>
    <source>
        <tissue>Brain</tissue>
    </source>
</reference>
<reference key="9">
    <citation type="journal article" date="2007" name="J. Neurochem.">
        <title>Mitochondrial aspartate aminotransferase: a third kynurenate-producing enzyme in the mammalian brain.</title>
        <authorList>
            <person name="Guidetti P."/>
            <person name="Amori L."/>
            <person name="Sapko M.T."/>
            <person name="Okuno E."/>
            <person name="Schwarcz R."/>
        </authorList>
    </citation>
    <scope>CATALYTIC ACTIVITY</scope>
    <scope>TISSUE SPECIFICITY</scope>
</reference>
<reference key="10">
    <citation type="journal article" date="2010" name="Cell">
        <title>A tissue-specific atlas of mouse protein phosphorylation and expression.</title>
        <authorList>
            <person name="Huttlin E.L."/>
            <person name="Jedrychowski M.P."/>
            <person name="Elias J.E."/>
            <person name="Goswami T."/>
            <person name="Rad R."/>
            <person name="Beausoleil S.A."/>
            <person name="Villen J."/>
            <person name="Haas W."/>
            <person name="Sowa M.E."/>
            <person name="Gygi S.P."/>
        </authorList>
    </citation>
    <scope>IDENTIFICATION BY MASS SPECTROMETRY [LARGE SCALE ANALYSIS]</scope>
    <source>
        <tissue>Brain</tissue>
        <tissue>Brown adipose tissue</tissue>
        <tissue>Heart</tissue>
        <tissue>Kidney</tissue>
        <tissue>Liver</tissue>
        <tissue>Lung</tissue>
        <tissue>Pancreas</tissue>
        <tissue>Spleen</tissue>
        <tissue>Testis</tissue>
    </source>
</reference>
<reference key="11">
    <citation type="journal article" date="2013" name="Mol. Cell">
        <title>SIRT5-mediated lysine desuccinylation impacts diverse metabolic pathways.</title>
        <authorList>
            <person name="Park J."/>
            <person name="Chen Y."/>
            <person name="Tishkoff D.X."/>
            <person name="Peng C."/>
            <person name="Tan M."/>
            <person name="Dai L."/>
            <person name="Xie Z."/>
            <person name="Zhang Y."/>
            <person name="Zwaans B.M."/>
            <person name="Skinner M.E."/>
            <person name="Lombard D.B."/>
            <person name="Zhao Y."/>
        </authorList>
    </citation>
    <scope>ACETYLATION [LARGE SCALE ANALYSIS] AT LYS-73; LYS-159 AND LYS-404</scope>
    <scope>SUCCINYLATION [LARGE SCALE ANALYSIS] AT LYS-73; LYS-90; LYS-107; LYS-122; LYS-159; LYS-185; LYS-227; LYS-296; LYS-309; LYS-338; LYS-363; LYS-396 AND LYS-404</scope>
    <scope>IDENTIFICATION BY MASS SPECTROMETRY [LARGE SCALE ANALYSIS]</scope>
    <source>
        <tissue>Embryonic fibroblast</tissue>
        <tissue>Liver</tissue>
    </source>
</reference>
<reference key="12">
    <citation type="journal article" date="2013" name="Proc. Natl. Acad. Sci. U.S.A.">
        <title>Label-free quantitative proteomics of the lysine acetylome in mitochondria identifies substrates of SIRT3 in metabolic pathways.</title>
        <authorList>
            <person name="Rardin M.J."/>
            <person name="Newman J.C."/>
            <person name="Held J.M."/>
            <person name="Cusack M.P."/>
            <person name="Sorensen D.J."/>
            <person name="Li B."/>
            <person name="Schilling B."/>
            <person name="Mooney S.D."/>
            <person name="Kahn C.R."/>
            <person name="Verdin E."/>
            <person name="Gibson B.W."/>
        </authorList>
    </citation>
    <scope>ACETYLATION [LARGE SCALE ANALYSIS] AT LYS-59; LYS-73; LYS-82; LYS-90; LYS-107; LYS-122; LYS-159; LYS-185; LYS-234; LYS-279; LYS-296; LYS-302; LYS-309; LYS-338; LYS-345; LYS-363; LYS-364; LYS-387; LYS-396 AND LYS-404</scope>
    <scope>IDENTIFICATION BY MASS SPECTROMETRY [LARGE SCALE ANALYSIS]</scope>
    <source>
        <tissue>Liver</tissue>
    </source>
</reference>
<reference key="13">
    <citation type="journal article" date="2014" name="Mol. Cell. Proteomics">
        <title>Immunoaffinity enrichment and mass spectrometry analysis of protein methylation.</title>
        <authorList>
            <person name="Guo A."/>
            <person name="Gu H."/>
            <person name="Zhou J."/>
            <person name="Mulhern D."/>
            <person name="Wang Y."/>
            <person name="Lee K.A."/>
            <person name="Yang V."/>
            <person name="Aguiar M."/>
            <person name="Kornhauser J."/>
            <person name="Jia X."/>
            <person name="Ren J."/>
            <person name="Beausoleil S.A."/>
            <person name="Silva J.C."/>
            <person name="Vemulapalli V."/>
            <person name="Bedford M.T."/>
            <person name="Comb M.J."/>
        </authorList>
    </citation>
    <scope>METHYLATION [LARGE SCALE ANALYSIS] AT ARG-313</scope>
    <scope>IDENTIFICATION BY MASS SPECTROMETRY [LARGE SCALE ANALYSIS]</scope>
    <source>
        <tissue>Brain</tissue>
    </source>
</reference>
<reference key="14">
    <citation type="journal article" date="2019" name="Am. J. Hum. Genet.">
        <title>Bi-allelic GOT2 mutations cause a treatable malate-aspartate shuttle-related encephalopathy.</title>
        <authorList>
            <person name="van Karnebeek C.D.M."/>
            <person name="Ramos R.J."/>
            <person name="Wen X.Y."/>
            <person name="Tarailo-Graovac M."/>
            <person name="Gleeson J.G."/>
            <person name="Skrypnyk C."/>
            <person name="Brand-Arzamendi K."/>
            <person name="Karbassi F."/>
            <person name="Issa M.Y."/>
            <person name="van der Lee R."/>
            <person name="Droegemoeller B.I."/>
            <person name="Koster J."/>
            <person name="Rousseau J."/>
            <person name="Campeau P.M."/>
            <person name="Wang Y."/>
            <person name="Cao F."/>
            <person name="Li M."/>
            <person name="Ruiter J."/>
            <person name="Ciapaite J."/>
            <person name="Kluijtmans L.A.J."/>
            <person name="Willemsen M.A.A.P."/>
            <person name="Jans J.J."/>
            <person name="Ross C.J."/>
            <person name="Wintjes L.T."/>
            <person name="Rodenburg R.J."/>
            <person name="Huigen M.C.D.G."/>
            <person name="Jia Z."/>
            <person name="Waterham H.R."/>
            <person name="Wasserman W.W."/>
            <person name="Wanders R.J.A."/>
            <person name="Verhoeven-Duif N.M."/>
            <person name="Zaki M.S."/>
            <person name="Wevers R.A."/>
        </authorList>
    </citation>
    <scope>MUTAGENESIS OF LEU-209 AND ARG-337</scope>
</reference>
<reference key="15">
    <citation type="journal article" date="2010" name="Cell. Mol. Life Sci.">
        <title>Structure, expression, and function of kynurenine aminotransferases in human and rodent brains.</title>
        <authorList>
            <person name="Han Q."/>
            <person name="Cai T."/>
            <person name="Tagle D.A."/>
            <person name="Li J."/>
        </authorList>
    </citation>
    <scope>X-RAY CRYSTALLOGRAPHY (2.50 ANGSTROMS) OF 30-430 IN COMPLEX WITH SYNTHETIC INHIBITOR</scope>
    <scope>SUBUNIT</scope>
</reference>
<reference key="16">
    <citation type="journal article" date="2011" name="Biosci. Rep.">
        <title>Biochemical and structural characterization of mouse mitochondrial aspartate aminotransferase, a newly identified kynurenine aminotransferase-IV.</title>
        <authorList>
            <person name="Han Q."/>
            <person name="Robinson H."/>
            <person name="Cai T."/>
            <person name="Tagle D.A."/>
            <person name="Li J."/>
        </authorList>
    </citation>
    <scope>X-RAY CRYSTALLOGRAPHY (2.40 ANGSTROMS) OF 30-430 IN COMPLEX WITH L-KYNURENINE; OXALOACETATE AND PYRIDOXAL PHOSPHATE</scope>
    <scope>CATALYTIC ACTIVITY</scope>
    <scope>FUNCTION</scope>
    <scope>SUBUNIT</scope>
    <scope>COFACTOR</scope>
</reference>
<dbReference type="EC" id="2.6.1.1" evidence="3"/>
<dbReference type="EC" id="2.6.1.7" evidence="3"/>
<dbReference type="EMBL" id="J02622">
    <property type="protein sequence ID" value="AAA37264.1"/>
    <property type="molecule type" value="mRNA"/>
</dbReference>
<dbReference type="EMBL" id="X06917">
    <property type="protein sequence ID" value="CAA30015.1"/>
    <property type="molecule type" value="Genomic_DNA"/>
</dbReference>
<dbReference type="EMBL" id="X06918">
    <property type="protein sequence ID" value="CAA30015.1"/>
    <property type="status" value="JOINED"/>
    <property type="molecule type" value="Genomic_DNA"/>
</dbReference>
<dbReference type="EMBL" id="X06919">
    <property type="protein sequence ID" value="CAA30015.1"/>
    <property type="status" value="JOINED"/>
    <property type="molecule type" value="Genomic_DNA"/>
</dbReference>
<dbReference type="EMBL" id="X06920">
    <property type="protein sequence ID" value="CAA30015.1"/>
    <property type="status" value="JOINED"/>
    <property type="molecule type" value="Genomic_DNA"/>
</dbReference>
<dbReference type="EMBL" id="X06921">
    <property type="protein sequence ID" value="CAA30015.1"/>
    <property type="status" value="JOINED"/>
    <property type="molecule type" value="Genomic_DNA"/>
</dbReference>
<dbReference type="EMBL" id="X06922">
    <property type="protein sequence ID" value="CAA30015.1"/>
    <property type="status" value="JOINED"/>
    <property type="molecule type" value="Genomic_DNA"/>
</dbReference>
<dbReference type="EMBL" id="X06923">
    <property type="protein sequence ID" value="CAA30015.1"/>
    <property type="status" value="JOINED"/>
    <property type="molecule type" value="Genomic_DNA"/>
</dbReference>
<dbReference type="EMBL" id="X06924">
    <property type="protein sequence ID" value="CAA30015.1"/>
    <property type="status" value="JOINED"/>
    <property type="molecule type" value="Genomic_DNA"/>
</dbReference>
<dbReference type="EMBL" id="X06925">
    <property type="protein sequence ID" value="CAA30015.1"/>
    <property type="status" value="JOINED"/>
    <property type="molecule type" value="Genomic_DNA"/>
</dbReference>
<dbReference type="EMBL" id="X06926">
    <property type="protein sequence ID" value="CAA30015.1"/>
    <property type="status" value="JOINED"/>
    <property type="molecule type" value="Genomic_DNA"/>
</dbReference>
<dbReference type="EMBL" id="M37259">
    <property type="protein sequence ID" value="AAA37265.1"/>
    <property type="status" value="ALT_SEQ"/>
    <property type="molecule type" value="Genomic_DNA"/>
</dbReference>
<dbReference type="EMBL" id="M37250">
    <property type="protein sequence ID" value="AAA37265.1"/>
    <property type="status" value="JOINED"/>
    <property type="molecule type" value="Genomic_DNA"/>
</dbReference>
<dbReference type="EMBL" id="M37251">
    <property type="protein sequence ID" value="AAA37265.1"/>
    <property type="status" value="JOINED"/>
    <property type="molecule type" value="Genomic_DNA"/>
</dbReference>
<dbReference type="EMBL" id="M37252">
    <property type="protein sequence ID" value="AAA37265.1"/>
    <property type="status" value="JOINED"/>
    <property type="molecule type" value="Genomic_DNA"/>
</dbReference>
<dbReference type="EMBL" id="M37253">
    <property type="protein sequence ID" value="AAA37265.1"/>
    <property type="status" value="JOINED"/>
    <property type="molecule type" value="Genomic_DNA"/>
</dbReference>
<dbReference type="EMBL" id="M37254">
    <property type="protein sequence ID" value="AAA37265.1"/>
    <property type="status" value="JOINED"/>
    <property type="molecule type" value="Genomic_DNA"/>
</dbReference>
<dbReference type="EMBL" id="M37255">
    <property type="protein sequence ID" value="AAA37265.1"/>
    <property type="status" value="JOINED"/>
    <property type="molecule type" value="Genomic_DNA"/>
</dbReference>
<dbReference type="EMBL" id="M37256">
    <property type="protein sequence ID" value="AAA37265.1"/>
    <property type="status" value="JOINED"/>
    <property type="molecule type" value="Genomic_DNA"/>
</dbReference>
<dbReference type="EMBL" id="M37258">
    <property type="protein sequence ID" value="AAA37265.1"/>
    <property type="status" value="JOINED"/>
    <property type="molecule type" value="Genomic_DNA"/>
</dbReference>
<dbReference type="EMBL" id="U82470">
    <property type="protein sequence ID" value="AAB91426.1"/>
    <property type="molecule type" value="mRNA"/>
</dbReference>
<dbReference type="EMBL" id="AK136556">
    <property type="protein sequence ID" value="BAE23042.1"/>
    <property type="molecule type" value="mRNA"/>
</dbReference>
<dbReference type="EMBL" id="AK147953">
    <property type="protein sequence ID" value="BAE28248.1"/>
    <property type="molecule type" value="mRNA"/>
</dbReference>
<dbReference type="EMBL" id="AK149886">
    <property type="protein sequence ID" value="BAE29146.1"/>
    <property type="molecule type" value="mRNA"/>
</dbReference>
<dbReference type="EMBL" id="AK149926">
    <property type="protein sequence ID" value="BAE29171.1"/>
    <property type="molecule type" value="mRNA"/>
</dbReference>
<dbReference type="EMBL" id="AK150194">
    <property type="protein sequence ID" value="BAE29370.1"/>
    <property type="molecule type" value="mRNA"/>
</dbReference>
<dbReference type="EMBL" id="AK152921">
    <property type="protein sequence ID" value="BAE31596.1"/>
    <property type="molecule type" value="mRNA"/>
</dbReference>
<dbReference type="EMBL" id="AK155075">
    <property type="protein sequence ID" value="BAE33029.1"/>
    <property type="molecule type" value="mRNA"/>
</dbReference>
<dbReference type="EMBL" id="AK167767">
    <property type="protein sequence ID" value="BAE39800.1"/>
    <property type="molecule type" value="mRNA"/>
</dbReference>
<dbReference type="EMBL" id="BC089015">
    <property type="protein sequence ID" value="AAH89015.1"/>
    <property type="molecule type" value="mRNA"/>
</dbReference>
<dbReference type="EMBL" id="BC089341">
    <property type="protein sequence ID" value="AAH89341.1"/>
    <property type="molecule type" value="mRNA"/>
</dbReference>
<dbReference type="CCDS" id="CCDS22568.1"/>
<dbReference type="PIR" id="S01174">
    <property type="entry name" value="S01174"/>
</dbReference>
<dbReference type="RefSeq" id="NP_034455.1">
    <property type="nucleotide sequence ID" value="NM_010325.3"/>
</dbReference>
<dbReference type="PDB" id="3HLM">
    <property type="method" value="X-ray"/>
    <property type="resolution" value="2.50 A"/>
    <property type="chains" value="A/B/C/D=30-430"/>
</dbReference>
<dbReference type="PDB" id="3PD6">
    <property type="method" value="X-ray"/>
    <property type="resolution" value="2.40 A"/>
    <property type="chains" value="A/B/C/D=30-430"/>
</dbReference>
<dbReference type="PDB" id="3PDB">
    <property type="method" value="X-ray"/>
    <property type="resolution" value="2.40 A"/>
    <property type="chains" value="A/B/C/D=30-430"/>
</dbReference>
<dbReference type="PDBsum" id="3HLM"/>
<dbReference type="PDBsum" id="3PD6"/>
<dbReference type="PDBsum" id="3PDB"/>
<dbReference type="SMR" id="P05202"/>
<dbReference type="BioGRID" id="200000">
    <property type="interactions" value="62"/>
</dbReference>
<dbReference type="FunCoup" id="P05202">
    <property type="interactions" value="1939"/>
</dbReference>
<dbReference type="IntAct" id="P05202">
    <property type="interactions" value="5"/>
</dbReference>
<dbReference type="MINT" id="P05202"/>
<dbReference type="STRING" id="10090.ENSMUSP00000034097"/>
<dbReference type="ChEMBL" id="CHEMBL3647"/>
<dbReference type="GlyGen" id="P05202">
    <property type="glycosylation" value="1 site, 1 O-linked glycan (1 site)"/>
</dbReference>
<dbReference type="iPTMnet" id="P05202"/>
<dbReference type="PhosphoSitePlus" id="P05202"/>
<dbReference type="SwissPalm" id="P05202"/>
<dbReference type="CPTAC" id="non-CPTAC-3628"/>
<dbReference type="jPOST" id="P05202"/>
<dbReference type="PaxDb" id="10090-ENSMUSP00000034097"/>
<dbReference type="PeptideAtlas" id="P05202"/>
<dbReference type="ProteomicsDB" id="285701"/>
<dbReference type="Pumba" id="P05202"/>
<dbReference type="TopDownProteomics" id="P05202"/>
<dbReference type="Antibodypedia" id="15396">
    <property type="antibodies" value="646 antibodies from 39 providers"/>
</dbReference>
<dbReference type="DNASU" id="14719"/>
<dbReference type="Ensembl" id="ENSMUST00000034097.8">
    <property type="protein sequence ID" value="ENSMUSP00000034097.8"/>
    <property type="gene ID" value="ENSMUSG00000031672.9"/>
</dbReference>
<dbReference type="GeneID" id="14719"/>
<dbReference type="KEGG" id="mmu:14719"/>
<dbReference type="UCSC" id="uc009mzi.1">
    <property type="organism name" value="mouse"/>
</dbReference>
<dbReference type="AGR" id="MGI:95792"/>
<dbReference type="CTD" id="2806"/>
<dbReference type="MGI" id="MGI:95792">
    <property type="gene designation" value="Got2"/>
</dbReference>
<dbReference type="VEuPathDB" id="HostDB:ENSMUSG00000031672"/>
<dbReference type="eggNOG" id="KOG1411">
    <property type="taxonomic scope" value="Eukaryota"/>
</dbReference>
<dbReference type="GeneTree" id="ENSGT00950000183082"/>
<dbReference type="HOGENOM" id="CLU_032440_1_2_1"/>
<dbReference type="InParanoid" id="P05202"/>
<dbReference type="OMA" id="VGACTIV"/>
<dbReference type="OrthoDB" id="6752799at2759"/>
<dbReference type="PhylomeDB" id="P05202"/>
<dbReference type="TreeFam" id="TF300641"/>
<dbReference type="BRENDA" id="2.6.1.7">
    <property type="organism ID" value="3474"/>
</dbReference>
<dbReference type="Reactome" id="R-MMU-389661">
    <property type="pathway name" value="Glyoxylate metabolism and glycine degradation"/>
</dbReference>
<dbReference type="Reactome" id="R-MMU-8963693">
    <property type="pathway name" value="Aspartate and asparagine metabolism"/>
</dbReference>
<dbReference type="Reactome" id="R-MMU-8964539">
    <property type="pathway name" value="Glutamate and glutamine metabolism"/>
</dbReference>
<dbReference type="Reactome" id="R-MMU-9856872">
    <property type="pathway name" value="Malate-aspartate shuttle"/>
</dbReference>
<dbReference type="BioGRID-ORCS" id="14719">
    <property type="hits" value="8 hits in 80 CRISPR screens"/>
</dbReference>
<dbReference type="ChiTaRS" id="Got2">
    <property type="organism name" value="mouse"/>
</dbReference>
<dbReference type="EvolutionaryTrace" id="P05202"/>
<dbReference type="PRO" id="PR:P05202"/>
<dbReference type="Proteomes" id="UP000000589">
    <property type="component" value="Chromosome 8"/>
</dbReference>
<dbReference type="RNAct" id="P05202">
    <property type="molecule type" value="protein"/>
</dbReference>
<dbReference type="Bgee" id="ENSMUSG00000031672">
    <property type="expression patterns" value="Expressed in hindlimb stylopod muscle and 137 other cell types or tissues"/>
</dbReference>
<dbReference type="GO" id="GO:0005743">
    <property type="term" value="C:mitochondrial inner membrane"/>
    <property type="evidence" value="ECO:0007005"/>
    <property type="project" value="MGI"/>
</dbReference>
<dbReference type="GO" id="GO:0005759">
    <property type="term" value="C:mitochondrial matrix"/>
    <property type="evidence" value="ECO:0000314"/>
    <property type="project" value="MGI"/>
</dbReference>
<dbReference type="GO" id="GO:0005739">
    <property type="term" value="C:mitochondrion"/>
    <property type="evidence" value="ECO:0000314"/>
    <property type="project" value="MGI"/>
</dbReference>
<dbReference type="GO" id="GO:0043209">
    <property type="term" value="C:myelin sheath"/>
    <property type="evidence" value="ECO:0007005"/>
    <property type="project" value="UniProtKB"/>
</dbReference>
<dbReference type="GO" id="GO:0005886">
    <property type="term" value="C:plasma membrane"/>
    <property type="evidence" value="ECO:0007669"/>
    <property type="project" value="UniProtKB-SubCell"/>
</dbReference>
<dbReference type="GO" id="GO:0016212">
    <property type="term" value="F:kynurenine-oxoglutarate transaminase activity"/>
    <property type="evidence" value="ECO:0007669"/>
    <property type="project" value="UniProtKB-EC"/>
</dbReference>
<dbReference type="GO" id="GO:0004069">
    <property type="term" value="F:L-aspartate:2-oxoglutarate aminotransferase activity"/>
    <property type="evidence" value="ECO:0000314"/>
    <property type="project" value="MGI"/>
</dbReference>
<dbReference type="GO" id="GO:0030170">
    <property type="term" value="F:pyridoxal phosphate binding"/>
    <property type="evidence" value="ECO:0007669"/>
    <property type="project" value="InterPro"/>
</dbReference>
<dbReference type="GO" id="GO:0006103">
    <property type="term" value="P:2-oxoglutarate metabolic process"/>
    <property type="evidence" value="ECO:0000250"/>
    <property type="project" value="UniProtKB"/>
</dbReference>
<dbReference type="GO" id="GO:0006532">
    <property type="term" value="P:aspartate biosynthetic process"/>
    <property type="evidence" value="ECO:0000314"/>
    <property type="project" value="MGI"/>
</dbReference>
<dbReference type="GO" id="GO:0006533">
    <property type="term" value="P:aspartate catabolic process"/>
    <property type="evidence" value="ECO:0007669"/>
    <property type="project" value="Ensembl"/>
</dbReference>
<dbReference type="GO" id="GO:0006531">
    <property type="term" value="P:aspartate metabolic process"/>
    <property type="evidence" value="ECO:0000250"/>
    <property type="project" value="UniProtKB"/>
</dbReference>
<dbReference type="GO" id="GO:0015908">
    <property type="term" value="P:fatty acid transport"/>
    <property type="evidence" value="ECO:0007669"/>
    <property type="project" value="Ensembl"/>
</dbReference>
<dbReference type="GO" id="GO:0006538">
    <property type="term" value="P:glutamate catabolic process"/>
    <property type="evidence" value="ECO:0000314"/>
    <property type="project" value="MGI"/>
</dbReference>
<dbReference type="GO" id="GO:0019550">
    <property type="term" value="P:glutamate catabolic process to aspartate"/>
    <property type="evidence" value="ECO:0000314"/>
    <property type="project" value="MGI"/>
</dbReference>
<dbReference type="GO" id="GO:0006536">
    <property type="term" value="P:glutamate metabolic process"/>
    <property type="evidence" value="ECO:0000250"/>
    <property type="project" value="UniProtKB"/>
</dbReference>
<dbReference type="GO" id="GO:0043490">
    <property type="term" value="P:malate-aspartate shuttle"/>
    <property type="evidence" value="ECO:0000315"/>
    <property type="project" value="MGI"/>
</dbReference>
<dbReference type="GO" id="GO:0006107">
    <property type="term" value="P:oxaloacetate metabolic process"/>
    <property type="evidence" value="ECO:0000314"/>
    <property type="project" value="MGI"/>
</dbReference>
<dbReference type="GO" id="GO:0045471">
    <property type="term" value="P:response to ethanol"/>
    <property type="evidence" value="ECO:0007669"/>
    <property type="project" value="Ensembl"/>
</dbReference>
<dbReference type="CDD" id="cd00609">
    <property type="entry name" value="AAT_like"/>
    <property type="match status" value="1"/>
</dbReference>
<dbReference type="FunFam" id="3.40.640.10:FF:000026">
    <property type="entry name" value="Aspartate aminotransferase"/>
    <property type="match status" value="1"/>
</dbReference>
<dbReference type="FunFam" id="3.90.1150.10:FF:000001">
    <property type="entry name" value="Aspartate aminotransferase"/>
    <property type="match status" value="1"/>
</dbReference>
<dbReference type="FunFam" id="3.90.1150.10:FF:000160">
    <property type="entry name" value="Similar to aspartate aminotransferase"/>
    <property type="match status" value="1"/>
</dbReference>
<dbReference type="Gene3D" id="3.90.1150.10">
    <property type="entry name" value="Aspartate Aminotransferase, domain 1"/>
    <property type="match status" value="1"/>
</dbReference>
<dbReference type="Gene3D" id="3.40.640.10">
    <property type="entry name" value="Type I PLP-dependent aspartate aminotransferase-like (Major domain)"/>
    <property type="match status" value="1"/>
</dbReference>
<dbReference type="InterPro" id="IPR004839">
    <property type="entry name" value="Aminotransferase_I/II_large"/>
</dbReference>
<dbReference type="InterPro" id="IPR000796">
    <property type="entry name" value="Asp_trans"/>
</dbReference>
<dbReference type="InterPro" id="IPR004838">
    <property type="entry name" value="NHTrfase_class1_PyrdxlP-BS"/>
</dbReference>
<dbReference type="InterPro" id="IPR015424">
    <property type="entry name" value="PyrdxlP-dep_Trfase"/>
</dbReference>
<dbReference type="InterPro" id="IPR015421">
    <property type="entry name" value="PyrdxlP-dep_Trfase_major"/>
</dbReference>
<dbReference type="InterPro" id="IPR015422">
    <property type="entry name" value="PyrdxlP-dep_Trfase_small"/>
</dbReference>
<dbReference type="NCBIfam" id="NF006719">
    <property type="entry name" value="PRK09257.1"/>
    <property type="match status" value="1"/>
</dbReference>
<dbReference type="PANTHER" id="PTHR11879">
    <property type="entry name" value="ASPARTATE AMINOTRANSFERASE"/>
    <property type="match status" value="1"/>
</dbReference>
<dbReference type="PANTHER" id="PTHR11879:SF22">
    <property type="entry name" value="ASPARTATE AMINOTRANSFERASE, MITOCHONDRIAL"/>
    <property type="match status" value="1"/>
</dbReference>
<dbReference type="Pfam" id="PF00155">
    <property type="entry name" value="Aminotran_1_2"/>
    <property type="match status" value="1"/>
</dbReference>
<dbReference type="PRINTS" id="PR00799">
    <property type="entry name" value="TRANSAMINASE"/>
</dbReference>
<dbReference type="SUPFAM" id="SSF53383">
    <property type="entry name" value="PLP-dependent transferases"/>
    <property type="match status" value="1"/>
</dbReference>
<dbReference type="PROSITE" id="PS00105">
    <property type="entry name" value="AA_TRANSFER_CLASS_1"/>
    <property type="match status" value="1"/>
</dbReference>
<name>AATM_MOUSE</name>
<proteinExistence type="evidence at protein level"/>
<gene>
    <name type="primary">Got2</name>
    <name type="synonym">Got-2</name>
</gene>